<feature type="signal peptide" evidence="3">
    <location>
        <begin position="1"/>
        <end position="26"/>
    </location>
</feature>
<feature type="chain" id="PRO_5003565015" description="Protein Bouncer" evidence="3">
    <location>
        <begin position="27"/>
        <end position="106"/>
    </location>
</feature>
<feature type="propeptide" id="PRO_0000445658" description="Removed in mature form" evidence="3">
    <location>
        <begin position="107"/>
        <end position="131"/>
    </location>
</feature>
<feature type="domain" description="UPAR/Ly6" evidence="3">
    <location>
        <begin position="31"/>
        <end position="106"/>
    </location>
</feature>
<feature type="lipid moiety-binding region" description="GPI-anchor amidated asparagine" evidence="3">
    <location>
        <position position="106"/>
    </location>
</feature>
<feature type="glycosylation site" description="N-linked (GlcNAc...) asparagine" evidence="4">
    <location>
        <position position="65"/>
    </location>
</feature>
<feature type="disulfide bond" evidence="2">
    <location>
        <begin position="31"/>
        <end position="56"/>
    </location>
</feature>
<feature type="disulfide bond" evidence="2">
    <location>
        <begin position="50"/>
        <end position="74"/>
    </location>
</feature>
<feature type="disulfide bond" evidence="2">
    <location>
        <begin position="80"/>
        <end position="99"/>
    </location>
</feature>
<feature type="disulfide bond" evidence="2">
    <location>
        <begin position="100"/>
        <end position="105"/>
    </location>
</feature>
<accession>H2LID1</accession>
<comment type="function">
    <text evidence="5">Oocyte-expressed fertilization factor that mediates sperm-egg binding and is essential for sperm entry into the egg (PubMed:30190407). Necessary and sufficient to mediate species-specific gamete recognition and fertilization, which is essential for vertebrate species performing external fertilization (PubMed:30190407). External fertilization cannot guarantee that only conspecific sperm reaches the egg by precopulatory mate choice: proteins such as Bouncer can therefore support the selection of conspecific sperm (PubMed:30190407).</text>
</comment>
<comment type="subunit">
    <text evidence="1">Interacts with spermatocyte complex composed of izumo1, spaca6 and tmem81.</text>
</comment>
<comment type="subcellular location">
    <subcellularLocation>
        <location evidence="1">Cell membrane</location>
        <topology evidence="1">Lipid-anchor</topology>
        <topology evidence="1">GPI-anchor</topology>
    </subcellularLocation>
</comment>
<comment type="tissue specificity">
    <text evidence="5">Expressed in oocytes (PubMed:30190407). Not expressed in testis (PubMed:30190407).</text>
</comment>
<comment type="miscellaneous">
    <text evidence="5">Zebrafish oocytes expressing O.latipes protein Bouncer can be fertilized by O.latipes, but not zebrafish, sperm.</text>
</comment>
<comment type="similarity">
    <text evidence="7">Belongs to the SPACA4/bouncer family.</text>
</comment>
<comment type="online information" name="Protein Spotlight">
    <link uri="https://www.proteinspotlight.org/back_issues/210/"/>
    <text>Silent walls - Issue 210 of January 2019</text>
</comment>
<reference key="1">
    <citation type="journal article" date="2007" name="Nature">
        <title>The medaka draft genome and insights into vertebrate genome evolution.</title>
        <authorList>
            <person name="Kasahara M."/>
            <person name="Naruse K."/>
            <person name="Sasaki S."/>
            <person name="Nakatani Y."/>
            <person name="Qu W."/>
            <person name="Ahsan B."/>
            <person name="Yamada T."/>
            <person name="Nagayasu Y."/>
            <person name="Doi K."/>
            <person name="Kasai Y."/>
            <person name="Jindo T."/>
            <person name="Kobayashi D."/>
            <person name="Shimada A."/>
            <person name="Toyoda A."/>
            <person name="Kuroki Y."/>
            <person name="Fujiyama A."/>
            <person name="Sasaki T."/>
            <person name="Shimizu A."/>
            <person name="Asakawa S."/>
            <person name="Shimizu N."/>
            <person name="Hashimoto S."/>
            <person name="Yang J."/>
            <person name="Lee Y."/>
            <person name="Matsushima K."/>
            <person name="Sugano S."/>
            <person name="Sakaizumi M."/>
            <person name="Narita T."/>
            <person name="Ohishi K."/>
            <person name="Haga S."/>
            <person name="Ohta F."/>
            <person name="Nomoto H."/>
            <person name="Nogata K."/>
            <person name="Morishita T."/>
            <person name="Endo T."/>
            <person name="Shin-I T."/>
            <person name="Takeda H."/>
            <person name="Morishita S."/>
            <person name="Kohara Y."/>
        </authorList>
    </citation>
    <scope>NUCLEOTIDE SEQUENCE [LARGE SCALE GENOMIC DNA]</scope>
    <source>
        <strain>Hd-rR</strain>
    </source>
</reference>
<reference key="2">
    <citation type="journal article" date="2018" name="Science">
        <title>The Ly6/uPAR protein Bouncer is necessary and sufficient for species-specific fertilization.</title>
        <authorList>
            <person name="Herberg S."/>
            <person name="Gert K.R."/>
            <person name="Schleiffer A."/>
            <person name="Pauli A."/>
        </authorList>
    </citation>
    <scope>FUNCTION</scope>
    <scope>TISSUE SPECIFICITY</scope>
</reference>
<keyword id="KW-1003">Cell membrane</keyword>
<keyword id="KW-1015">Disulfide bond</keyword>
<keyword id="KW-0278">Fertilization</keyword>
<keyword id="KW-0325">Glycoprotein</keyword>
<keyword id="KW-0336">GPI-anchor</keyword>
<keyword id="KW-0449">Lipoprotein</keyword>
<keyword id="KW-0472">Membrane</keyword>
<keyword id="KW-1185">Reference proteome</keyword>
<keyword id="KW-0732">Signal</keyword>
<evidence type="ECO:0000250" key="1">
    <source>
        <dbReference type="UniProtKB" id="P0DPQ9"/>
    </source>
</evidence>
<evidence type="ECO:0000250" key="2">
    <source>
        <dbReference type="UniProtKB" id="P13987"/>
    </source>
</evidence>
<evidence type="ECO:0000255" key="3"/>
<evidence type="ECO:0000255" key="4">
    <source>
        <dbReference type="PROSITE-ProRule" id="PRU00498"/>
    </source>
</evidence>
<evidence type="ECO:0000269" key="5">
    <source>
    </source>
</evidence>
<evidence type="ECO:0000303" key="6">
    <source>
    </source>
</evidence>
<evidence type="ECO:0000305" key="7"/>
<sequence length="131" mass="14641">MGSLRTRQLFHAALLWLCLPLPLLLCENLHCYYSPVLEKEITFELVVTECPPNEMCFKGLGRYGNYTALSARGCMLEKDCSQVHSLRLLGTVYTMSYSCCDWPYCNRAVALEPLTAMLVAAAVVACSFCLT</sequence>
<name>BNCR_ORYLA</name>
<gene>
    <name evidence="6" type="primary">bncr</name>
</gene>
<organism>
    <name type="scientific">Oryzias latipes</name>
    <name type="common">Japanese rice fish</name>
    <name type="synonym">Japanese killifish</name>
    <dbReference type="NCBI Taxonomy" id="8090"/>
    <lineage>
        <taxon>Eukaryota</taxon>
        <taxon>Metazoa</taxon>
        <taxon>Chordata</taxon>
        <taxon>Craniata</taxon>
        <taxon>Vertebrata</taxon>
        <taxon>Euteleostomi</taxon>
        <taxon>Actinopterygii</taxon>
        <taxon>Neopterygii</taxon>
        <taxon>Teleostei</taxon>
        <taxon>Neoteleostei</taxon>
        <taxon>Acanthomorphata</taxon>
        <taxon>Ovalentaria</taxon>
        <taxon>Atherinomorphae</taxon>
        <taxon>Beloniformes</taxon>
        <taxon>Adrianichthyidae</taxon>
        <taxon>Oryziinae</taxon>
        <taxon>Oryzias</taxon>
    </lineage>
</organism>
<protein>
    <recommendedName>
        <fullName evidence="6">Protein Bouncer</fullName>
    </recommendedName>
</protein>
<proteinExistence type="evidence at transcript level"/>
<dbReference type="EMBL" id="BAAF04034626">
    <property type="status" value="NOT_ANNOTATED_CDS"/>
    <property type="molecule type" value="Genomic_DNA"/>
</dbReference>
<dbReference type="EMBL" id="BAAF04034627">
    <property type="status" value="NOT_ANNOTATED_CDS"/>
    <property type="molecule type" value="Genomic_DNA"/>
</dbReference>
<dbReference type="SMR" id="H2LID1"/>
<dbReference type="GlyCosmos" id="H2LID1">
    <property type="glycosylation" value="1 site, No reported glycans"/>
</dbReference>
<dbReference type="HOGENOM" id="CLU_1926927_0_0_1"/>
<dbReference type="InParanoid" id="H2LID1"/>
<dbReference type="OMA" id="CCDWPYC"/>
<dbReference type="Proteomes" id="UP000001038">
    <property type="component" value="Unplaced"/>
</dbReference>
<dbReference type="Proteomes" id="UP000265180">
    <property type="component" value="Chromosome 9"/>
</dbReference>
<dbReference type="Proteomes" id="UP000265200">
    <property type="component" value="Chromosome 9"/>
</dbReference>
<dbReference type="GO" id="GO:0005886">
    <property type="term" value="C:plasma membrane"/>
    <property type="evidence" value="ECO:0000250"/>
    <property type="project" value="UniProtKB"/>
</dbReference>
<dbReference type="GO" id="GO:0098552">
    <property type="term" value="C:side of membrane"/>
    <property type="evidence" value="ECO:0007669"/>
    <property type="project" value="UniProtKB-KW"/>
</dbReference>
<dbReference type="GO" id="GO:0007342">
    <property type="term" value="P:fusion of sperm to egg plasma membrane involved in single fertilization"/>
    <property type="evidence" value="ECO:0000314"/>
    <property type="project" value="UniProtKB"/>
</dbReference>
<dbReference type="GO" id="GO:0007338">
    <property type="term" value="P:single fertilization"/>
    <property type="evidence" value="ECO:0000314"/>
    <property type="project" value="UniProtKB"/>
</dbReference>
<dbReference type="GO" id="GO:0035036">
    <property type="term" value="P:sperm-egg recognition"/>
    <property type="evidence" value="ECO:0000314"/>
    <property type="project" value="UniProtKB"/>
</dbReference>
<dbReference type="CDD" id="cd23597">
    <property type="entry name" value="TFP_LU_ECD_Bncr"/>
    <property type="match status" value="1"/>
</dbReference>
<dbReference type="FunFam" id="2.10.60.10:FF:000039">
    <property type="entry name" value="Sperm acrosome-associated 4-like"/>
    <property type="match status" value="1"/>
</dbReference>
<dbReference type="Gene3D" id="2.10.60.10">
    <property type="entry name" value="CD59"/>
    <property type="match status" value="1"/>
</dbReference>
<dbReference type="InterPro" id="IPR016054">
    <property type="entry name" value="LY6_UPA_recep-like"/>
</dbReference>
<dbReference type="InterPro" id="IPR045860">
    <property type="entry name" value="Snake_toxin-like_sf"/>
</dbReference>
<dbReference type="InterPro" id="IPR046354">
    <property type="entry name" value="SPACA4/Bouncer"/>
</dbReference>
<dbReference type="PANTHER" id="PTHR47613">
    <property type="entry name" value="SPERM ACROSOME MEMBRANE-ASSOCIATED PROTEIN 4"/>
    <property type="match status" value="1"/>
</dbReference>
<dbReference type="PANTHER" id="PTHR47613:SF1">
    <property type="entry name" value="SPERM ACROSOME MEMBRANE-ASSOCIATED PROTEIN 4"/>
    <property type="match status" value="1"/>
</dbReference>
<dbReference type="Pfam" id="PF00021">
    <property type="entry name" value="UPAR_LY6"/>
    <property type="match status" value="1"/>
</dbReference>
<dbReference type="SUPFAM" id="SSF57302">
    <property type="entry name" value="Snake toxin-like"/>
    <property type="match status" value="1"/>
</dbReference>